<organism>
    <name type="scientific">Cereibacter sphaeroides (strain ATCC 17025 / ATH 2.4.3)</name>
    <name type="common">Rhodobacter sphaeroides</name>
    <dbReference type="NCBI Taxonomy" id="349102"/>
    <lineage>
        <taxon>Bacteria</taxon>
        <taxon>Pseudomonadati</taxon>
        <taxon>Pseudomonadota</taxon>
        <taxon>Alphaproteobacteria</taxon>
        <taxon>Rhodobacterales</taxon>
        <taxon>Paracoccaceae</taxon>
        <taxon>Cereibacter</taxon>
    </lineage>
</organism>
<proteinExistence type="inferred from homology"/>
<keyword id="KW-0030">Aminoacyl-tRNA synthetase</keyword>
<keyword id="KW-0067">ATP-binding</keyword>
<keyword id="KW-0963">Cytoplasm</keyword>
<keyword id="KW-0436">Ligase</keyword>
<keyword id="KW-0479">Metal-binding</keyword>
<keyword id="KW-0547">Nucleotide-binding</keyword>
<keyword id="KW-0648">Protein biosynthesis</keyword>
<keyword id="KW-0694">RNA-binding</keyword>
<keyword id="KW-0820">tRNA-binding</keyword>
<keyword id="KW-0862">Zinc</keyword>
<protein>
    <recommendedName>
        <fullName evidence="1">Alanine--tRNA ligase</fullName>
        <ecNumber evidence="1">6.1.1.7</ecNumber>
    </recommendedName>
    <alternativeName>
        <fullName evidence="1">Alanyl-tRNA synthetase</fullName>
        <shortName evidence="1">AlaRS</shortName>
    </alternativeName>
</protein>
<feature type="chain" id="PRO_0000347753" description="Alanine--tRNA ligase">
    <location>
        <begin position="1"/>
        <end position="883"/>
    </location>
</feature>
<feature type="binding site" evidence="1">
    <location>
        <position position="563"/>
    </location>
    <ligand>
        <name>Zn(2+)</name>
        <dbReference type="ChEBI" id="CHEBI:29105"/>
    </ligand>
</feature>
<feature type="binding site" evidence="1">
    <location>
        <position position="567"/>
    </location>
    <ligand>
        <name>Zn(2+)</name>
        <dbReference type="ChEBI" id="CHEBI:29105"/>
    </ligand>
</feature>
<feature type="binding site" evidence="1">
    <location>
        <position position="677"/>
    </location>
    <ligand>
        <name>Zn(2+)</name>
        <dbReference type="ChEBI" id="CHEBI:29105"/>
    </ligand>
</feature>
<feature type="binding site" evidence="1">
    <location>
        <position position="681"/>
    </location>
    <ligand>
        <name>Zn(2+)</name>
        <dbReference type="ChEBI" id="CHEBI:29105"/>
    </ligand>
</feature>
<sequence>MPSLNDIRSTFLDYFRRNGHRVVESSPLVPRNDPTLMFTNSGMVQFKNCFTGLEHRDYTRATTAQKCVRAGGKHNDLDNVGYTARHHTFFEMLGNFSFGDYFKSEAIPFAWELLTRDFDIPREKLLVTVYHTDDEAASIWKKVAGLPDDRIIRIPTNDNFWMMGPTGPCGPCTEIFYDHGPSIWGGPPGSADEDGDRFIEIWNLVFMQNEQHPDGSMTPLPKQSIDTGMGLERIGALLQGKHDNYDTDLMRSLIEASAHATSTDPDGTGKTHHRVIADHLRSTSFLIADGVMPSNEGRGYVLRRIMRRAMRHAHLLGAQDPVMHRLVPALVRQMGAAYPELTRGQALIEETLKLEETRFRQTLDRGLRLLEDELDRLPEGSPLPGEAAFKLYDTYGFPLDLTQDALREKGRKVDVEGFEAAMAEQKAKARASWSGSGETKDAAIWFDLAERHGATEFLGYDTEKAEGQILAIVAGGVDTASATPGQTVQIILNQTPFYAESGGQVGDTGELRTDTGRARITDVRKGQGLFLHFAEVTEGEIRPGQGAALEVDHARRSAIRANHSATHLLHEALRRALGDHVAQRGSLNAPDRLRFDFSHSKALSAEELATVEAEVNQFIRSNGMVETRIMSPDDARALGAQALFGEKYGDEVRVVSMGTLAGSGKGMDGQTYSLELCGGTHVARLGDIGLCVILGDSASSAGVRRIEALTGEGALAHLNEQMQRLAEVAATLKASPAEMVDRVKALVEERRQLQNEVAQLRREAAMGGGAAAEAKDIGGVKFLAQIVQGVPGKDMPGLIDEMKARVGSGAVLLISDTAGKAALAAGVTPDLTDRLSAVALVKAAAEALGGRGGGGRPDMAQAGAADASQAEAAIRAVEAVIGG</sequence>
<accession>A4WV47</accession>
<name>SYA_CERS5</name>
<comment type="function">
    <text evidence="1">Catalyzes the attachment of alanine to tRNA(Ala) in a two-step reaction: alanine is first activated by ATP to form Ala-AMP and then transferred to the acceptor end of tRNA(Ala). Also edits incorrectly charged Ser-tRNA(Ala) and Gly-tRNA(Ala) via its editing domain.</text>
</comment>
<comment type="catalytic activity">
    <reaction evidence="1">
        <text>tRNA(Ala) + L-alanine + ATP = L-alanyl-tRNA(Ala) + AMP + diphosphate</text>
        <dbReference type="Rhea" id="RHEA:12540"/>
        <dbReference type="Rhea" id="RHEA-COMP:9657"/>
        <dbReference type="Rhea" id="RHEA-COMP:9923"/>
        <dbReference type="ChEBI" id="CHEBI:30616"/>
        <dbReference type="ChEBI" id="CHEBI:33019"/>
        <dbReference type="ChEBI" id="CHEBI:57972"/>
        <dbReference type="ChEBI" id="CHEBI:78442"/>
        <dbReference type="ChEBI" id="CHEBI:78497"/>
        <dbReference type="ChEBI" id="CHEBI:456215"/>
        <dbReference type="EC" id="6.1.1.7"/>
    </reaction>
</comment>
<comment type="cofactor">
    <cofactor evidence="1">
        <name>Zn(2+)</name>
        <dbReference type="ChEBI" id="CHEBI:29105"/>
    </cofactor>
    <text evidence="1">Binds 1 zinc ion per subunit.</text>
</comment>
<comment type="subcellular location">
    <subcellularLocation>
        <location evidence="1">Cytoplasm</location>
    </subcellularLocation>
</comment>
<comment type="domain">
    <text evidence="1">Consists of three domains; the N-terminal catalytic domain, the editing domain and the C-terminal C-Ala domain. The editing domain removes incorrectly charged amino acids, while the C-Ala domain, along with tRNA(Ala), serves as a bridge to cooperatively bring together the editing and aminoacylation centers thus stimulating deacylation of misacylated tRNAs.</text>
</comment>
<comment type="similarity">
    <text evidence="1">Belongs to the class-II aminoacyl-tRNA synthetase family.</text>
</comment>
<dbReference type="EC" id="6.1.1.7" evidence="1"/>
<dbReference type="EMBL" id="CP000661">
    <property type="protein sequence ID" value="ABP71261.1"/>
    <property type="molecule type" value="Genomic_DNA"/>
</dbReference>
<dbReference type="SMR" id="A4WV47"/>
<dbReference type="STRING" id="349102.Rsph17025_2372"/>
<dbReference type="KEGG" id="rsq:Rsph17025_2372"/>
<dbReference type="eggNOG" id="COG0013">
    <property type="taxonomic scope" value="Bacteria"/>
</dbReference>
<dbReference type="HOGENOM" id="CLU_004485_1_1_5"/>
<dbReference type="BioCyc" id="RSPH349102:G1G8M-2447-MONOMER"/>
<dbReference type="GO" id="GO:0005829">
    <property type="term" value="C:cytosol"/>
    <property type="evidence" value="ECO:0007669"/>
    <property type="project" value="TreeGrafter"/>
</dbReference>
<dbReference type="GO" id="GO:0004813">
    <property type="term" value="F:alanine-tRNA ligase activity"/>
    <property type="evidence" value="ECO:0007669"/>
    <property type="project" value="UniProtKB-UniRule"/>
</dbReference>
<dbReference type="GO" id="GO:0002161">
    <property type="term" value="F:aminoacyl-tRNA deacylase activity"/>
    <property type="evidence" value="ECO:0007669"/>
    <property type="project" value="TreeGrafter"/>
</dbReference>
<dbReference type="GO" id="GO:0005524">
    <property type="term" value="F:ATP binding"/>
    <property type="evidence" value="ECO:0007669"/>
    <property type="project" value="UniProtKB-UniRule"/>
</dbReference>
<dbReference type="GO" id="GO:0000049">
    <property type="term" value="F:tRNA binding"/>
    <property type="evidence" value="ECO:0007669"/>
    <property type="project" value="UniProtKB-KW"/>
</dbReference>
<dbReference type="GO" id="GO:0008270">
    <property type="term" value="F:zinc ion binding"/>
    <property type="evidence" value="ECO:0007669"/>
    <property type="project" value="UniProtKB-UniRule"/>
</dbReference>
<dbReference type="GO" id="GO:0006419">
    <property type="term" value="P:alanyl-tRNA aminoacylation"/>
    <property type="evidence" value="ECO:0007669"/>
    <property type="project" value="UniProtKB-UniRule"/>
</dbReference>
<dbReference type="GO" id="GO:0045892">
    <property type="term" value="P:negative regulation of DNA-templated transcription"/>
    <property type="evidence" value="ECO:0007669"/>
    <property type="project" value="TreeGrafter"/>
</dbReference>
<dbReference type="CDD" id="cd00673">
    <property type="entry name" value="AlaRS_core"/>
    <property type="match status" value="1"/>
</dbReference>
<dbReference type="FunFam" id="3.10.310.40:FF:000001">
    <property type="entry name" value="Alanine--tRNA ligase"/>
    <property type="match status" value="1"/>
</dbReference>
<dbReference type="FunFam" id="3.30.54.20:FF:000001">
    <property type="entry name" value="Alanine--tRNA ligase"/>
    <property type="match status" value="1"/>
</dbReference>
<dbReference type="FunFam" id="3.30.930.10:FF:000004">
    <property type="entry name" value="Alanine--tRNA ligase"/>
    <property type="match status" value="1"/>
</dbReference>
<dbReference type="FunFam" id="3.30.980.10:FF:000004">
    <property type="entry name" value="Alanine--tRNA ligase, cytoplasmic"/>
    <property type="match status" value="1"/>
</dbReference>
<dbReference type="Gene3D" id="2.40.30.130">
    <property type="match status" value="1"/>
</dbReference>
<dbReference type="Gene3D" id="3.10.310.40">
    <property type="match status" value="1"/>
</dbReference>
<dbReference type="Gene3D" id="3.30.54.20">
    <property type="match status" value="1"/>
</dbReference>
<dbReference type="Gene3D" id="6.10.250.550">
    <property type="match status" value="1"/>
</dbReference>
<dbReference type="Gene3D" id="3.30.930.10">
    <property type="entry name" value="Bira Bifunctional Protein, Domain 2"/>
    <property type="match status" value="1"/>
</dbReference>
<dbReference type="Gene3D" id="3.30.980.10">
    <property type="entry name" value="Threonyl-trna Synthetase, Chain A, domain 2"/>
    <property type="match status" value="1"/>
</dbReference>
<dbReference type="HAMAP" id="MF_00036_B">
    <property type="entry name" value="Ala_tRNA_synth_B"/>
    <property type="match status" value="1"/>
</dbReference>
<dbReference type="InterPro" id="IPR045864">
    <property type="entry name" value="aa-tRNA-synth_II/BPL/LPL"/>
</dbReference>
<dbReference type="InterPro" id="IPR002318">
    <property type="entry name" value="Ala-tRNA-lgiase_IIc"/>
</dbReference>
<dbReference type="InterPro" id="IPR018162">
    <property type="entry name" value="Ala-tRNA-ligase_IIc_anticod-bd"/>
</dbReference>
<dbReference type="InterPro" id="IPR018165">
    <property type="entry name" value="Ala-tRNA-synth_IIc_core"/>
</dbReference>
<dbReference type="InterPro" id="IPR018164">
    <property type="entry name" value="Ala-tRNA-synth_IIc_N"/>
</dbReference>
<dbReference type="InterPro" id="IPR050058">
    <property type="entry name" value="Ala-tRNA_ligase"/>
</dbReference>
<dbReference type="InterPro" id="IPR023033">
    <property type="entry name" value="Ala_tRNA_ligase_euk/bac"/>
</dbReference>
<dbReference type="InterPro" id="IPR003156">
    <property type="entry name" value="DHHA1_dom"/>
</dbReference>
<dbReference type="InterPro" id="IPR018163">
    <property type="entry name" value="Thr/Ala-tRNA-synth_IIc_edit"/>
</dbReference>
<dbReference type="InterPro" id="IPR009000">
    <property type="entry name" value="Transl_B-barrel_sf"/>
</dbReference>
<dbReference type="InterPro" id="IPR012947">
    <property type="entry name" value="tRNA_SAD"/>
</dbReference>
<dbReference type="NCBIfam" id="TIGR00344">
    <property type="entry name" value="alaS"/>
    <property type="match status" value="1"/>
</dbReference>
<dbReference type="PANTHER" id="PTHR11777:SF9">
    <property type="entry name" value="ALANINE--TRNA LIGASE, CYTOPLASMIC"/>
    <property type="match status" value="1"/>
</dbReference>
<dbReference type="PANTHER" id="PTHR11777">
    <property type="entry name" value="ALANYL-TRNA SYNTHETASE"/>
    <property type="match status" value="1"/>
</dbReference>
<dbReference type="Pfam" id="PF02272">
    <property type="entry name" value="DHHA1"/>
    <property type="match status" value="1"/>
</dbReference>
<dbReference type="Pfam" id="PF01411">
    <property type="entry name" value="tRNA-synt_2c"/>
    <property type="match status" value="1"/>
</dbReference>
<dbReference type="Pfam" id="PF07973">
    <property type="entry name" value="tRNA_SAD"/>
    <property type="match status" value="1"/>
</dbReference>
<dbReference type="PRINTS" id="PR00980">
    <property type="entry name" value="TRNASYNTHALA"/>
</dbReference>
<dbReference type="SMART" id="SM00863">
    <property type="entry name" value="tRNA_SAD"/>
    <property type="match status" value="1"/>
</dbReference>
<dbReference type="SUPFAM" id="SSF55681">
    <property type="entry name" value="Class II aaRS and biotin synthetases"/>
    <property type="match status" value="1"/>
</dbReference>
<dbReference type="SUPFAM" id="SSF101353">
    <property type="entry name" value="Putative anticodon-binding domain of alanyl-tRNA synthetase (AlaRS)"/>
    <property type="match status" value="1"/>
</dbReference>
<dbReference type="SUPFAM" id="SSF55186">
    <property type="entry name" value="ThrRS/AlaRS common domain"/>
    <property type="match status" value="1"/>
</dbReference>
<dbReference type="SUPFAM" id="SSF50447">
    <property type="entry name" value="Translation proteins"/>
    <property type="match status" value="1"/>
</dbReference>
<dbReference type="PROSITE" id="PS50860">
    <property type="entry name" value="AA_TRNA_LIGASE_II_ALA"/>
    <property type="match status" value="1"/>
</dbReference>
<reference key="1">
    <citation type="submission" date="2007-04" db="EMBL/GenBank/DDBJ databases">
        <title>Complete sequence of chromosome of Rhodobacter sphaeroides ATCC 17025.</title>
        <authorList>
            <consortium name="US DOE Joint Genome Institute"/>
            <person name="Copeland A."/>
            <person name="Lucas S."/>
            <person name="Lapidus A."/>
            <person name="Barry K."/>
            <person name="Detter J.C."/>
            <person name="Glavina del Rio T."/>
            <person name="Hammon N."/>
            <person name="Israni S."/>
            <person name="Dalin E."/>
            <person name="Tice H."/>
            <person name="Pitluck S."/>
            <person name="Chertkov O."/>
            <person name="Brettin T."/>
            <person name="Bruce D."/>
            <person name="Han C."/>
            <person name="Schmutz J."/>
            <person name="Larimer F."/>
            <person name="Land M."/>
            <person name="Hauser L."/>
            <person name="Kyrpides N."/>
            <person name="Kim E."/>
            <person name="Richardson P."/>
            <person name="Mackenzie C."/>
            <person name="Choudhary M."/>
            <person name="Donohue T.J."/>
            <person name="Kaplan S."/>
        </authorList>
    </citation>
    <scope>NUCLEOTIDE SEQUENCE [LARGE SCALE GENOMIC DNA]</scope>
    <source>
        <strain>ATCC 17025 / ATH 2.4.3</strain>
    </source>
</reference>
<gene>
    <name evidence="1" type="primary">alaS</name>
    <name type="ordered locus">Rsph17025_2372</name>
</gene>
<evidence type="ECO:0000255" key="1">
    <source>
        <dbReference type="HAMAP-Rule" id="MF_00036"/>
    </source>
</evidence>